<reference key="1">
    <citation type="journal article" date="2005" name="Nature">
        <title>Generation and annotation of the DNA sequences of human chromosomes 2 and 4.</title>
        <authorList>
            <person name="Hillier L.W."/>
            <person name="Graves T.A."/>
            <person name="Fulton R.S."/>
            <person name="Fulton L.A."/>
            <person name="Pepin K.H."/>
            <person name="Minx P."/>
            <person name="Wagner-McPherson C."/>
            <person name="Layman D."/>
            <person name="Wylie K."/>
            <person name="Sekhon M."/>
            <person name="Becker M.C."/>
            <person name="Fewell G.A."/>
            <person name="Delehaunty K.D."/>
            <person name="Miner T.L."/>
            <person name="Nash W.E."/>
            <person name="Kremitzki C."/>
            <person name="Oddy L."/>
            <person name="Du H."/>
            <person name="Sun H."/>
            <person name="Bradshaw-Cordum H."/>
            <person name="Ali J."/>
            <person name="Carter J."/>
            <person name="Cordes M."/>
            <person name="Harris A."/>
            <person name="Isak A."/>
            <person name="van Brunt A."/>
            <person name="Nguyen C."/>
            <person name="Du F."/>
            <person name="Courtney L."/>
            <person name="Kalicki J."/>
            <person name="Ozersky P."/>
            <person name="Abbott S."/>
            <person name="Armstrong J."/>
            <person name="Belter E.A."/>
            <person name="Caruso L."/>
            <person name="Cedroni M."/>
            <person name="Cotton M."/>
            <person name="Davidson T."/>
            <person name="Desai A."/>
            <person name="Elliott G."/>
            <person name="Erb T."/>
            <person name="Fronick C."/>
            <person name="Gaige T."/>
            <person name="Haakenson W."/>
            <person name="Haglund K."/>
            <person name="Holmes A."/>
            <person name="Harkins R."/>
            <person name="Kim K."/>
            <person name="Kruchowski S.S."/>
            <person name="Strong C.M."/>
            <person name="Grewal N."/>
            <person name="Goyea E."/>
            <person name="Hou S."/>
            <person name="Levy A."/>
            <person name="Martinka S."/>
            <person name="Mead K."/>
            <person name="McLellan M.D."/>
            <person name="Meyer R."/>
            <person name="Randall-Maher J."/>
            <person name="Tomlinson C."/>
            <person name="Dauphin-Kohlberg S."/>
            <person name="Kozlowicz-Reilly A."/>
            <person name="Shah N."/>
            <person name="Swearengen-Shahid S."/>
            <person name="Snider J."/>
            <person name="Strong J.T."/>
            <person name="Thompson J."/>
            <person name="Yoakum M."/>
            <person name="Leonard S."/>
            <person name="Pearman C."/>
            <person name="Trani L."/>
            <person name="Radionenko M."/>
            <person name="Waligorski J.E."/>
            <person name="Wang C."/>
            <person name="Rock S.M."/>
            <person name="Tin-Wollam A.-M."/>
            <person name="Maupin R."/>
            <person name="Latreille P."/>
            <person name="Wendl M.C."/>
            <person name="Yang S.-P."/>
            <person name="Pohl C."/>
            <person name="Wallis J.W."/>
            <person name="Spieth J."/>
            <person name="Bieri T.A."/>
            <person name="Berkowicz N."/>
            <person name="Nelson J.O."/>
            <person name="Osborne J."/>
            <person name="Ding L."/>
            <person name="Meyer R."/>
            <person name="Sabo A."/>
            <person name="Shotland Y."/>
            <person name="Sinha P."/>
            <person name="Wohldmann P.E."/>
            <person name="Cook L.L."/>
            <person name="Hickenbotham M.T."/>
            <person name="Eldred J."/>
            <person name="Williams D."/>
            <person name="Jones T.A."/>
            <person name="She X."/>
            <person name="Ciccarelli F.D."/>
            <person name="Izaurralde E."/>
            <person name="Taylor J."/>
            <person name="Schmutz J."/>
            <person name="Myers R.M."/>
            <person name="Cox D.R."/>
            <person name="Huang X."/>
            <person name="McPherson J.D."/>
            <person name="Mardis E.R."/>
            <person name="Clifton S.W."/>
            <person name="Warren W.C."/>
            <person name="Chinwalla A.T."/>
            <person name="Eddy S.R."/>
            <person name="Marra M.A."/>
            <person name="Ovcharenko I."/>
            <person name="Furey T.S."/>
            <person name="Miller W."/>
            <person name="Eichler E.E."/>
            <person name="Bork P."/>
            <person name="Suyama M."/>
            <person name="Torrents D."/>
            <person name="Waterston R.H."/>
            <person name="Wilson R.K."/>
        </authorList>
    </citation>
    <scope>NUCLEOTIDE SEQUENCE [LARGE SCALE GENOMIC DNA]</scope>
</reference>
<reference key="2">
    <citation type="submission" date="2005-07" db="EMBL/GenBank/DDBJ databases">
        <authorList>
            <person name="Mural R.J."/>
            <person name="Istrail S."/>
            <person name="Sutton G.G."/>
            <person name="Florea L."/>
            <person name="Halpern A.L."/>
            <person name="Mobarry C.M."/>
            <person name="Lippert R."/>
            <person name="Walenz B."/>
            <person name="Shatkay H."/>
            <person name="Dew I."/>
            <person name="Miller J.R."/>
            <person name="Flanigan M.J."/>
            <person name="Edwards N.J."/>
            <person name="Bolanos R."/>
            <person name="Fasulo D."/>
            <person name="Halldorsson B.V."/>
            <person name="Hannenhalli S."/>
            <person name="Turner R."/>
            <person name="Yooseph S."/>
            <person name="Lu F."/>
            <person name="Nusskern D.R."/>
            <person name="Shue B.C."/>
            <person name="Zheng X.H."/>
            <person name="Zhong F."/>
            <person name="Delcher A.L."/>
            <person name="Huson D.H."/>
            <person name="Kravitz S.A."/>
            <person name="Mouchard L."/>
            <person name="Reinert K."/>
            <person name="Remington K.A."/>
            <person name="Clark A.G."/>
            <person name="Waterman M.S."/>
            <person name="Eichler E.E."/>
            <person name="Adams M.D."/>
            <person name="Hunkapiller M.W."/>
            <person name="Myers E.W."/>
            <person name="Venter J.C."/>
        </authorList>
    </citation>
    <scope>NUCLEOTIDE SEQUENCE [LARGE SCALE GENOMIC DNA]</scope>
</reference>
<reference key="3">
    <citation type="journal article" date="2020" name="SLAS Discovery">
        <title>A Pilot Screen of a Novel Peptide Hormone Library Identified Candidate GPR83 Ligands.</title>
        <authorList>
            <person name="Sallee N.A."/>
            <person name="Lee E."/>
            <person name="Leffert A."/>
            <person name="Ramirez S."/>
            <person name="Brace A.D."/>
            <person name="Halenbeck R."/>
            <person name="Kavanaugh W.M."/>
            <person name="Sullivan K.M.C."/>
        </authorList>
    </citation>
    <scope>FUNCTION</scope>
    <scope>IDENTIFICATION BY MASS SPECTROMETRY</scope>
    <scope>TISSUE SPECIFICITY</scope>
    <scope>AMIDATION AT LEU-113</scope>
</reference>
<protein>
    <recommendedName>
        <fullName evidence="2">Protein FAM237A</fullName>
    </recommendedName>
</protein>
<comment type="function">
    <text evidence="1">May be capable of activating GPR83 via the GNAQ signaling pathway.</text>
</comment>
<comment type="subcellular location">
    <subcellularLocation>
        <location evidence="3">Secreted</location>
    </subcellularLocation>
</comment>
<comment type="tissue specificity">
    <text evidence="1">Expressed in the pituitary, testis, and heart and at lower levels in the brain.</text>
</comment>
<comment type="PTM">
    <text evidence="1">The active form requires C-terminal amidation and disulfide bond formation.</text>
</comment>
<accession>A0A1B0GTK4</accession>
<sequence length="181" mass="20560">MADPGNRGGIHRPLSFTCSLLIVGMCCVSPFFCHSQTDLLALSQADPQCWESSSVLLLEMWKPRVSNTVSGFWDFMIYLKSSENLKHGALFWDLAQLFWDIYVDCVLSRNHGLGRRQLVGEEEKISAAQPQHTRSKQGTYSQLLRTSFLKKKELIEDLISMHVRRSGSSVIGKVNLEIKRK</sequence>
<organism>
    <name type="scientific">Homo sapiens</name>
    <name type="common">Human</name>
    <dbReference type="NCBI Taxonomy" id="9606"/>
    <lineage>
        <taxon>Eukaryota</taxon>
        <taxon>Metazoa</taxon>
        <taxon>Chordata</taxon>
        <taxon>Craniata</taxon>
        <taxon>Vertebrata</taxon>
        <taxon>Euteleostomi</taxon>
        <taxon>Mammalia</taxon>
        <taxon>Eutheria</taxon>
        <taxon>Euarchontoglires</taxon>
        <taxon>Primates</taxon>
        <taxon>Haplorrhini</taxon>
        <taxon>Catarrhini</taxon>
        <taxon>Hominidae</taxon>
        <taxon>Homo</taxon>
    </lineage>
</organism>
<proteinExistence type="evidence at protein level"/>
<name>F237A_HUMAN</name>
<dbReference type="EMBL" id="AC010731">
    <property type="status" value="NOT_ANNOTATED_CDS"/>
    <property type="molecule type" value="Genomic_DNA"/>
</dbReference>
<dbReference type="EMBL" id="CH471063">
    <property type="protein sequence ID" value="EAW70389.1"/>
    <property type="molecule type" value="Genomic_DNA"/>
</dbReference>
<dbReference type="CCDS" id="CCDS82560.1"/>
<dbReference type="RefSeq" id="NP_001096129.1">
    <property type="nucleotide sequence ID" value="NM_001102659.3"/>
</dbReference>
<dbReference type="FunCoup" id="A0A1B0GTK4">
    <property type="interactions" value="1"/>
</dbReference>
<dbReference type="STRING" id="9606.ENSP00000490802"/>
<dbReference type="BioMuta" id="FAM237A"/>
<dbReference type="MassIVE" id="A0A1B0GTK4"/>
<dbReference type="PeptideAtlas" id="A0A1B0GTK4"/>
<dbReference type="Antibodypedia" id="78617">
    <property type="antibodies" value="2 antibodies from 2 providers"/>
</dbReference>
<dbReference type="DNASU" id="200726"/>
<dbReference type="Ensembl" id="ENST00000441223.4">
    <property type="protein sequence ID" value="ENSP00000490802.1"/>
    <property type="gene ID" value="ENSG00000235118.9"/>
</dbReference>
<dbReference type="GeneID" id="200726"/>
<dbReference type="KEGG" id="hsa:200726"/>
<dbReference type="MANE-Select" id="ENST00000441223.4">
    <property type="protein sequence ID" value="ENSP00000490802.1"/>
    <property type="RefSeq nucleotide sequence ID" value="NM_001102659.3"/>
    <property type="RefSeq protein sequence ID" value="NP_001096129.1"/>
</dbReference>
<dbReference type="AGR" id="HGNC:52388"/>
<dbReference type="CTD" id="200726"/>
<dbReference type="DisGeNET" id="200726"/>
<dbReference type="GeneCards" id="FAM237A"/>
<dbReference type="HGNC" id="HGNC:52388">
    <property type="gene designation" value="FAM237A"/>
</dbReference>
<dbReference type="HPA" id="ENSG00000235118">
    <property type="expression patterns" value="Not detected"/>
</dbReference>
<dbReference type="neXtProt" id="NX_A0A1B0GTK4"/>
<dbReference type="VEuPathDB" id="HostDB:ENSG00000235118"/>
<dbReference type="GeneTree" id="ENSGT00390000015769"/>
<dbReference type="InParanoid" id="A0A1B0GTK4"/>
<dbReference type="OMA" id="CTMRLTC"/>
<dbReference type="OrthoDB" id="9931800at2759"/>
<dbReference type="PAN-GO" id="A0A1B0GTK4">
    <property type="GO annotations" value="0 GO annotations based on evolutionary models"/>
</dbReference>
<dbReference type="BioGRID-ORCS" id="200726">
    <property type="hits" value="9 hits in 212 CRISPR screens"/>
</dbReference>
<dbReference type="GenomeRNAi" id="200726"/>
<dbReference type="Pharos" id="A0A1B0GTK4">
    <property type="development level" value="Tdark"/>
</dbReference>
<dbReference type="PRO" id="PR:A0A1B0GTK4"/>
<dbReference type="Proteomes" id="UP000005640">
    <property type="component" value="Chromosome 2"/>
</dbReference>
<dbReference type="RNAct" id="A0A1B0GTK4">
    <property type="molecule type" value="protein"/>
</dbReference>
<dbReference type="Bgee" id="ENSG00000235118">
    <property type="expression patterns" value="Expressed in male germ line stem cell (sensu Vertebrata) in testis and 50 other cell types or tissues"/>
</dbReference>
<dbReference type="GO" id="GO:0005576">
    <property type="term" value="C:extracellular region"/>
    <property type="evidence" value="ECO:0007669"/>
    <property type="project" value="UniProtKB-SubCell"/>
</dbReference>
<dbReference type="InterPro" id="IPR040439">
    <property type="entry name" value="FAM237A/B"/>
</dbReference>
<dbReference type="PANTHER" id="PTHR36690">
    <property type="entry name" value="PROTEIN FAM237A"/>
    <property type="match status" value="1"/>
</dbReference>
<dbReference type="PANTHER" id="PTHR36690:SF2">
    <property type="entry name" value="PROTEIN FAM237A"/>
    <property type="match status" value="1"/>
</dbReference>
<keyword id="KW-0027">Amidation</keyword>
<keyword id="KW-1185">Reference proteome</keyword>
<keyword id="KW-0964">Secreted</keyword>
<keyword id="KW-0732">Signal</keyword>
<feature type="signal peptide" evidence="3">
    <location>
        <begin position="1"/>
        <end position="33"/>
    </location>
</feature>
<feature type="chain" id="PRO_0000440611" description="Protein FAM237A">
    <location>
        <begin position="34"/>
        <end position="181"/>
    </location>
</feature>
<feature type="propeptide" id="PRO_0000457709" description="Removed in the mature form" evidence="1">
    <location>
        <begin position="114"/>
        <end position="181"/>
    </location>
</feature>
<feature type="modified residue" description="Leucine amide" evidence="1">
    <location>
        <position position="113"/>
    </location>
</feature>
<evidence type="ECO:0000269" key="1">
    <source>
    </source>
</evidence>
<evidence type="ECO:0000305" key="2"/>
<evidence type="ECO:0000305" key="3">
    <source>
    </source>
</evidence>
<evidence type="ECO:0000312" key="4">
    <source>
        <dbReference type="HGNC" id="HGNC:52388"/>
    </source>
</evidence>
<gene>
    <name evidence="4" type="primary">FAM237A</name>
</gene>